<evidence type="ECO:0000255" key="1">
    <source>
        <dbReference type="HAMAP-Rule" id="MF_01318"/>
    </source>
</evidence>
<evidence type="ECO:0000256" key="2">
    <source>
        <dbReference type="SAM" id="MobiDB-lite"/>
    </source>
</evidence>
<evidence type="ECO:0000305" key="3"/>
<proteinExistence type="inferred from homology"/>
<gene>
    <name evidence="1" type="primary">rplA</name>
    <name type="ordered locus">cu0288</name>
</gene>
<protein>
    <recommendedName>
        <fullName evidence="1">Large ribosomal subunit protein uL1</fullName>
    </recommendedName>
    <alternativeName>
        <fullName evidence="3">50S ribosomal protein L1</fullName>
    </alternativeName>
</protein>
<accession>B1VEQ9</accession>
<keyword id="KW-1185">Reference proteome</keyword>
<keyword id="KW-0678">Repressor</keyword>
<keyword id="KW-0687">Ribonucleoprotein</keyword>
<keyword id="KW-0689">Ribosomal protein</keyword>
<keyword id="KW-0694">RNA-binding</keyword>
<keyword id="KW-0699">rRNA-binding</keyword>
<keyword id="KW-0810">Translation regulation</keyword>
<keyword id="KW-0820">tRNA-binding</keyword>
<comment type="function">
    <text evidence="1">Binds directly to 23S rRNA. The L1 stalk is quite mobile in the ribosome, and is involved in E site tRNA release.</text>
</comment>
<comment type="function">
    <text evidence="1">Protein L1 is also a translational repressor protein, it controls the translation of the L11 operon by binding to its mRNA.</text>
</comment>
<comment type="subunit">
    <text evidence="1">Part of the 50S ribosomal subunit.</text>
</comment>
<comment type="similarity">
    <text evidence="1">Belongs to the universal ribosomal protein uL1 family.</text>
</comment>
<dbReference type="EMBL" id="AM942444">
    <property type="protein sequence ID" value="CAQ04248.1"/>
    <property type="molecule type" value="Genomic_DNA"/>
</dbReference>
<dbReference type="RefSeq" id="WP_012359549.1">
    <property type="nucleotide sequence ID" value="NC_010545.1"/>
</dbReference>
<dbReference type="SMR" id="B1VEQ9"/>
<dbReference type="STRING" id="504474.cu0288"/>
<dbReference type="GeneID" id="60605093"/>
<dbReference type="KEGG" id="cur:cu0288"/>
<dbReference type="eggNOG" id="COG0081">
    <property type="taxonomic scope" value="Bacteria"/>
</dbReference>
<dbReference type="HOGENOM" id="CLU_062853_0_0_11"/>
<dbReference type="Proteomes" id="UP000001727">
    <property type="component" value="Chromosome"/>
</dbReference>
<dbReference type="GO" id="GO:0015934">
    <property type="term" value="C:large ribosomal subunit"/>
    <property type="evidence" value="ECO:0007669"/>
    <property type="project" value="InterPro"/>
</dbReference>
<dbReference type="GO" id="GO:0019843">
    <property type="term" value="F:rRNA binding"/>
    <property type="evidence" value="ECO:0007669"/>
    <property type="project" value="UniProtKB-UniRule"/>
</dbReference>
<dbReference type="GO" id="GO:0003735">
    <property type="term" value="F:structural constituent of ribosome"/>
    <property type="evidence" value="ECO:0007669"/>
    <property type="project" value="InterPro"/>
</dbReference>
<dbReference type="GO" id="GO:0000049">
    <property type="term" value="F:tRNA binding"/>
    <property type="evidence" value="ECO:0007669"/>
    <property type="project" value="UniProtKB-KW"/>
</dbReference>
<dbReference type="GO" id="GO:0006417">
    <property type="term" value="P:regulation of translation"/>
    <property type="evidence" value="ECO:0007669"/>
    <property type="project" value="UniProtKB-KW"/>
</dbReference>
<dbReference type="GO" id="GO:0006412">
    <property type="term" value="P:translation"/>
    <property type="evidence" value="ECO:0007669"/>
    <property type="project" value="UniProtKB-UniRule"/>
</dbReference>
<dbReference type="CDD" id="cd00403">
    <property type="entry name" value="Ribosomal_L1"/>
    <property type="match status" value="1"/>
</dbReference>
<dbReference type="FunFam" id="3.40.50.790:FF:000001">
    <property type="entry name" value="50S ribosomal protein L1"/>
    <property type="match status" value="1"/>
</dbReference>
<dbReference type="Gene3D" id="3.30.190.20">
    <property type="match status" value="1"/>
</dbReference>
<dbReference type="Gene3D" id="3.40.50.790">
    <property type="match status" value="1"/>
</dbReference>
<dbReference type="HAMAP" id="MF_01318_B">
    <property type="entry name" value="Ribosomal_uL1_B"/>
    <property type="match status" value="1"/>
</dbReference>
<dbReference type="InterPro" id="IPR005878">
    <property type="entry name" value="Ribosom_uL1_bac-type"/>
</dbReference>
<dbReference type="InterPro" id="IPR002143">
    <property type="entry name" value="Ribosomal_uL1"/>
</dbReference>
<dbReference type="InterPro" id="IPR023674">
    <property type="entry name" value="Ribosomal_uL1-like"/>
</dbReference>
<dbReference type="InterPro" id="IPR028364">
    <property type="entry name" value="Ribosomal_uL1/biogenesis"/>
</dbReference>
<dbReference type="InterPro" id="IPR016095">
    <property type="entry name" value="Ribosomal_uL1_3-a/b-sand"/>
</dbReference>
<dbReference type="InterPro" id="IPR023673">
    <property type="entry name" value="Ribosomal_uL1_CS"/>
</dbReference>
<dbReference type="NCBIfam" id="TIGR01169">
    <property type="entry name" value="rplA_bact"/>
    <property type="match status" value="1"/>
</dbReference>
<dbReference type="PANTHER" id="PTHR36427">
    <property type="entry name" value="54S RIBOSOMAL PROTEIN L1, MITOCHONDRIAL"/>
    <property type="match status" value="1"/>
</dbReference>
<dbReference type="PANTHER" id="PTHR36427:SF3">
    <property type="entry name" value="LARGE RIBOSOMAL SUBUNIT PROTEIN UL1M"/>
    <property type="match status" value="1"/>
</dbReference>
<dbReference type="Pfam" id="PF00687">
    <property type="entry name" value="Ribosomal_L1"/>
    <property type="match status" value="1"/>
</dbReference>
<dbReference type="PIRSF" id="PIRSF002155">
    <property type="entry name" value="Ribosomal_L1"/>
    <property type="match status" value="1"/>
</dbReference>
<dbReference type="SUPFAM" id="SSF56808">
    <property type="entry name" value="Ribosomal protein L1"/>
    <property type="match status" value="1"/>
</dbReference>
<dbReference type="PROSITE" id="PS01199">
    <property type="entry name" value="RIBOSOMAL_L1"/>
    <property type="match status" value="1"/>
</dbReference>
<sequence>MSKVSKAYREAAAKVDRDNKYTPLQAAKLAKATSSKNYDATIDVAIRLGVDPRKADQLVRGTVALPNGTGKDVRVVVFAEGPNATAAEEAGADFVGSAELIEKIQGGWTDFDAAIATPDQMAKVGRVARVLGPRGLMPNPKTGTVTTDVAKAVSEIKGGKISFRVDKASNLHALIGKASFDEKKLAENYGALIDELLRIKPSSSKGKYIKKVTLSSTNGPGVPVDETIQKNYADDAEA</sequence>
<reference key="1">
    <citation type="journal article" date="2008" name="J. Biotechnol.">
        <title>The lifestyle of Corynebacterium urealyticum derived from its complete genome sequence established by pyrosequencing.</title>
        <authorList>
            <person name="Tauch A."/>
            <person name="Trost E."/>
            <person name="Tilker A."/>
            <person name="Ludewig U."/>
            <person name="Schneiker S."/>
            <person name="Goesmann A."/>
            <person name="Arnold W."/>
            <person name="Bekel T."/>
            <person name="Brinkrolf K."/>
            <person name="Brune I."/>
            <person name="Goetker S."/>
            <person name="Kalinowski J."/>
            <person name="Kamp P.-B."/>
            <person name="Lobo F.P."/>
            <person name="Viehoever P."/>
            <person name="Weisshaar B."/>
            <person name="Soriano F."/>
            <person name="Droege M."/>
            <person name="Puehler A."/>
        </authorList>
    </citation>
    <scope>NUCLEOTIDE SEQUENCE [LARGE SCALE GENOMIC DNA]</scope>
    <source>
        <strain>ATCC 43042 / DSM 7109</strain>
    </source>
</reference>
<organism>
    <name type="scientific">Corynebacterium urealyticum (strain ATCC 43042 / DSM 7109)</name>
    <dbReference type="NCBI Taxonomy" id="504474"/>
    <lineage>
        <taxon>Bacteria</taxon>
        <taxon>Bacillati</taxon>
        <taxon>Actinomycetota</taxon>
        <taxon>Actinomycetes</taxon>
        <taxon>Mycobacteriales</taxon>
        <taxon>Corynebacteriaceae</taxon>
        <taxon>Corynebacterium</taxon>
    </lineage>
</organism>
<feature type="chain" id="PRO_1000141383" description="Large ribosomal subunit protein uL1">
    <location>
        <begin position="1"/>
        <end position="238"/>
    </location>
</feature>
<feature type="region of interest" description="Disordered" evidence="2">
    <location>
        <begin position="217"/>
        <end position="238"/>
    </location>
</feature>
<name>RL1_CORU7</name>